<name>BOML1_BOMVA</name>
<sequence>QRLGHQWAVGHLM</sequence>
<comment type="function">
    <text evidence="2">Possesses insulin-releasing activity.</text>
</comment>
<comment type="subcellular location">
    <subcellularLocation>
        <location evidence="2">Secreted</location>
    </subcellularLocation>
</comment>
<comment type="tissue specificity">
    <text evidence="2">Expressed by the skin glands.</text>
</comment>
<comment type="mass spectrometry"/>
<comment type="similarity">
    <text evidence="3">Belongs to the bombesin/neuromedin-B/ranatensin family.</text>
</comment>
<keyword id="KW-0027">Amidation</keyword>
<keyword id="KW-0878">Amphibian defense peptide</keyword>
<keyword id="KW-0903">Direct protein sequencing</keyword>
<keyword id="KW-0873">Pyrrolidone carboxylic acid</keyword>
<keyword id="KW-0964">Secreted</keyword>
<proteinExistence type="evidence at protein level"/>
<organism>
    <name type="scientific">Bombina variegata</name>
    <name type="common">Yellow-bellied toad</name>
    <dbReference type="NCBI Taxonomy" id="8348"/>
    <lineage>
        <taxon>Eukaryota</taxon>
        <taxon>Metazoa</taxon>
        <taxon>Chordata</taxon>
        <taxon>Craniata</taxon>
        <taxon>Vertebrata</taxon>
        <taxon>Euteleostomi</taxon>
        <taxon>Amphibia</taxon>
        <taxon>Batrachia</taxon>
        <taxon>Anura</taxon>
        <taxon>Bombinatoridae</taxon>
        <taxon>Bombina</taxon>
    </lineage>
</organism>
<protein>
    <recommendedName>
        <fullName>Bombesin-like peptide 1</fullName>
    </recommendedName>
</protein>
<dbReference type="GO" id="GO:0005576">
    <property type="term" value="C:extracellular region"/>
    <property type="evidence" value="ECO:0000314"/>
    <property type="project" value="UniProtKB"/>
</dbReference>
<dbReference type="GO" id="GO:0005179">
    <property type="term" value="F:hormone activity"/>
    <property type="evidence" value="ECO:0000304"/>
    <property type="project" value="UniProtKB"/>
</dbReference>
<dbReference type="GO" id="GO:0006952">
    <property type="term" value="P:defense response"/>
    <property type="evidence" value="ECO:0000304"/>
    <property type="project" value="UniProtKB"/>
</dbReference>
<dbReference type="GO" id="GO:0007218">
    <property type="term" value="P:neuropeptide signaling pathway"/>
    <property type="evidence" value="ECO:0007669"/>
    <property type="project" value="InterPro"/>
</dbReference>
<dbReference type="GO" id="GO:0050796">
    <property type="term" value="P:regulation of insulin secretion"/>
    <property type="evidence" value="ECO:0000314"/>
    <property type="project" value="UniProtKB"/>
</dbReference>
<dbReference type="InterPro" id="IPR000874">
    <property type="entry name" value="Bombesin"/>
</dbReference>
<dbReference type="Pfam" id="PF02044">
    <property type="entry name" value="Bombesin"/>
    <property type="match status" value="1"/>
</dbReference>
<dbReference type="PROSITE" id="PS00257">
    <property type="entry name" value="BOMBESIN"/>
    <property type="match status" value="1"/>
</dbReference>
<reference evidence="3" key="1">
    <citation type="journal article" date="2004" name="Biol. Chem.">
        <title>Skin secretion of the toad Bombina variegata contains multiple insulin-releasing peptides including bombesin and entirely novel insulinotropic structures.</title>
        <authorList>
            <person name="Marenah L."/>
            <person name="Flatt P.R."/>
            <person name="Orr D.F."/>
            <person name="McClean S."/>
            <person name="Shaw C."/>
            <person name="Abdel-Wahab Y.H."/>
        </authorList>
    </citation>
    <scope>PROTEIN SEQUENCE</scope>
    <scope>FUNCTION</scope>
    <scope>SUBCELLULAR LOCATION</scope>
    <scope>TISSUE SPECIFICITY</scope>
    <scope>MASS SPECTROMETRY</scope>
    <source>
        <tissue evidence="2">Skin secretion</tissue>
    </source>
</reference>
<accession>P84212</accession>
<feature type="peptide" id="PRO_0000043489" description="Bombesin-like peptide 1">
    <location>
        <begin position="1"/>
        <end position="13"/>
    </location>
</feature>
<feature type="modified residue" description="Pyrrolidone carboxylic acid" evidence="1">
    <location>
        <position position="1"/>
    </location>
</feature>
<feature type="modified residue" description="Methionine amide" evidence="1">
    <location>
        <position position="13"/>
    </location>
</feature>
<evidence type="ECO:0000250" key="1">
    <source>
        <dbReference type="UniProtKB" id="P84213"/>
    </source>
</evidence>
<evidence type="ECO:0000269" key="2">
    <source>
    </source>
</evidence>
<evidence type="ECO:0000305" key="3"/>